<gene>
    <name evidence="1" type="primary">Snap29</name>
</gene>
<proteinExistence type="evidence at protein level"/>
<keyword id="KW-0072">Autophagy</keyword>
<keyword id="KW-1003">Cell membrane</keyword>
<keyword id="KW-0966">Cell projection</keyword>
<keyword id="KW-0969">Cilium</keyword>
<keyword id="KW-0970">Cilium biogenesis/degradation</keyword>
<keyword id="KW-0175">Coiled coil</keyword>
<keyword id="KW-0963">Cytoplasm</keyword>
<keyword id="KW-0968">Cytoplasmic vesicle</keyword>
<keyword id="KW-0903">Direct protein sequencing</keyword>
<keyword id="KW-0333">Golgi apparatus</keyword>
<keyword id="KW-0472">Membrane</keyword>
<keyword id="KW-0597">Phosphoprotein</keyword>
<keyword id="KW-0653">Protein transport</keyword>
<keyword id="KW-1185">Reference proteome</keyword>
<keyword id="KW-0813">Transport</keyword>
<sequence>MSGYPKSYNPFDDDVEDEDTRPAPWKDARDLPDGPDPPIDRQQYLRQEVLRGPSATAASTSRSLFLMYESEKIGVASSEELVRQRGVLEHTEKMVDKMDQDLKMSQKHINSIKSVFGGFINYFKSKPVEPPPEQNGSIVPQPSSRLKEAINTSKDQESKYQASHPNLRRLHDAELDSVPASTVNTEVYPKNSSLRAYHQKIDSNLDELSVGLGRLKDIALGMQTEIEEQDDILDRLTTKVDKLDVNIKSTEKKVRQL</sequence>
<comment type="function">
    <text evidence="1">SNAREs, soluble N-ethylmaleimide-sensitive factor-attachment protein receptors, are essential proteins for fusion of cellular membranes. SNAREs localized on opposing membranes assemble to form a trans-SNARE complex, an extended, parallel four alpha-helical bundle that drives membrane fusion. SNAP29 is a SNARE involved in autophagy through the direct control of autophagosome membrane fusion with the lysososome membrane. Also plays a role in ciliogenesis by regulating membrane fusions.</text>
</comment>
<comment type="subunit">
    <text evidence="1 4 5">Forms a SNARE complex, composed of VAMP8, SNAP29 and STX17, involved in fusion of autophagosome with lysosome (By similarity). Interacts with multiple syntaxins including STX6 (PubMed:9880331). Interacts with EIPR1 (PubMed:27191843). Interacts with STX17; this interaction is increased in the absence of TMEM39A (By similarity).</text>
</comment>
<comment type="interaction">
    <interactant intactId="EBI-492883">
        <id>Q9Z2P6</id>
    </interactant>
    <interactant intactId="EBI-492911">
        <id>Q641Z6</id>
        <label>Ehd1</label>
    </interactant>
    <organismsDiffer>false</organismsDiffer>
    <experiments>2</experiments>
</comment>
<comment type="interaction">
    <interactant intactId="EBI-492883">
        <id>Q9Z2P6</id>
    </interactant>
    <interactant intactId="EBI-491022">
        <id>Q9EQP2</id>
        <label>Ehd4</label>
    </interactant>
    <organismsDiffer>true</organismsDiffer>
    <experiments>2</experiments>
</comment>
<comment type="subcellular location">
    <subcellularLocation>
        <location evidence="5">Cytoplasm</location>
    </subcellularLocation>
    <subcellularLocation>
        <location evidence="5">Golgi apparatus membrane</location>
        <topology evidence="6">Peripheral membrane protein</topology>
    </subcellularLocation>
    <subcellularLocation>
        <location evidence="1">Cytoplasmic vesicle</location>
        <location evidence="1">Autophagosome membrane</location>
        <topology evidence="6">Peripheral membrane protein</topology>
    </subcellularLocation>
    <subcellularLocation>
        <location evidence="1">Cell projection</location>
        <location evidence="1">Cilium membrane</location>
        <topology evidence="6">Peripheral membrane protein</topology>
    </subcellularLocation>
    <text evidence="1">Appears to be mostly membrane-bound, probably via interaction with syntaxins, but a significant portion is cytoplasmic. Localizes to the ciliary pocket from where the cilium protrudes.</text>
</comment>
<comment type="tissue specificity">
    <text evidence="5">Widely expressed.</text>
</comment>
<comment type="similarity">
    <text evidence="6">Belongs to the SNAP-25 family.</text>
</comment>
<organism>
    <name type="scientific">Rattus norvegicus</name>
    <name type="common">Rat</name>
    <dbReference type="NCBI Taxonomy" id="10116"/>
    <lineage>
        <taxon>Eukaryota</taxon>
        <taxon>Metazoa</taxon>
        <taxon>Chordata</taxon>
        <taxon>Craniata</taxon>
        <taxon>Vertebrata</taxon>
        <taxon>Euteleostomi</taxon>
        <taxon>Mammalia</taxon>
        <taxon>Eutheria</taxon>
        <taxon>Euarchontoglires</taxon>
        <taxon>Glires</taxon>
        <taxon>Rodentia</taxon>
        <taxon>Myomorpha</taxon>
        <taxon>Muroidea</taxon>
        <taxon>Muridae</taxon>
        <taxon>Murinae</taxon>
        <taxon>Rattus</taxon>
    </lineage>
</organism>
<name>SNP29_RAT</name>
<accession>Q9Z2P6</accession>
<feature type="chain" id="PRO_0000213603" description="Synaptosomal-associated protein 29">
    <location>
        <begin position="1"/>
        <end position="257"/>
    </location>
</feature>
<feature type="domain" description="t-SNARE coiled-coil homology" evidence="2">
    <location>
        <begin position="195"/>
        <end position="257"/>
    </location>
</feature>
<feature type="region of interest" description="Disordered" evidence="3">
    <location>
        <begin position="1"/>
        <end position="42"/>
    </location>
</feature>
<feature type="compositionally biased region" description="Basic and acidic residues" evidence="3">
    <location>
        <begin position="20"/>
        <end position="32"/>
    </location>
</feature>
<feature type="modified residue" description="Phosphoserine" evidence="1">
    <location>
        <position position="77"/>
    </location>
</feature>
<feature type="modified residue" description="Phosphoserine" evidence="1">
    <location>
        <position position="78"/>
    </location>
</feature>
<feature type="modified residue" description="Phosphoserine" evidence="1">
    <location>
        <position position="114"/>
    </location>
</feature>
<feature type="modified residue" description="Phosphoserine" evidence="1">
    <location>
        <position position="163"/>
    </location>
</feature>
<feature type="modified residue" description="Phosphoserine" evidence="1">
    <location>
        <position position="181"/>
    </location>
</feature>
<feature type="modified residue" description="Phosphoserine" evidence="1">
    <location>
        <position position="203"/>
    </location>
</feature>
<feature type="modified residue" description="Phosphoserine" evidence="1">
    <location>
        <position position="209"/>
    </location>
</feature>
<protein>
    <recommendedName>
        <fullName evidence="1">Synaptosomal-associated protein 29</fullName>
        <shortName evidence="1">SNAP-29</shortName>
    </recommendedName>
    <alternativeName>
        <fullName>Golgi SNARE of 32 kDa</fullName>
        <shortName>Gs32</shortName>
    </alternativeName>
    <alternativeName>
        <fullName>Soluble 29 kDa NSF attachment protein</fullName>
    </alternativeName>
    <alternativeName>
        <fullName>Vesicle-membrane fusion protein SNAP-29</fullName>
    </alternativeName>
</protein>
<evidence type="ECO:0000250" key="1">
    <source>
        <dbReference type="UniProtKB" id="O95721"/>
    </source>
</evidence>
<evidence type="ECO:0000255" key="2">
    <source>
        <dbReference type="PROSITE-ProRule" id="PRU00202"/>
    </source>
</evidence>
<evidence type="ECO:0000256" key="3">
    <source>
        <dbReference type="SAM" id="MobiDB-lite"/>
    </source>
</evidence>
<evidence type="ECO:0000269" key="4">
    <source>
    </source>
</evidence>
<evidence type="ECO:0000269" key="5">
    <source>
    </source>
</evidence>
<evidence type="ECO:0000305" key="6"/>
<dbReference type="EMBL" id="AF035822">
    <property type="protein sequence ID" value="AAC72291.1"/>
    <property type="molecule type" value="mRNA"/>
</dbReference>
<dbReference type="SMR" id="Q9Z2P6"/>
<dbReference type="CORUM" id="Q9Z2P6"/>
<dbReference type="ELM" id="Q9Z2P6"/>
<dbReference type="FunCoup" id="Q9Z2P6">
    <property type="interactions" value="2599"/>
</dbReference>
<dbReference type="IntAct" id="Q9Z2P6">
    <property type="interactions" value="4"/>
</dbReference>
<dbReference type="STRING" id="10116.ENSRNOP00000002550"/>
<dbReference type="GlyGen" id="Q9Z2P6">
    <property type="glycosylation" value="1 site, 1 O-linked glycan (1 site)"/>
</dbReference>
<dbReference type="iPTMnet" id="Q9Z2P6"/>
<dbReference type="PhosphoSitePlus" id="Q9Z2P6"/>
<dbReference type="jPOST" id="Q9Z2P6"/>
<dbReference type="PaxDb" id="10116-ENSRNOP00000002550"/>
<dbReference type="AGR" id="RGD:620225"/>
<dbReference type="RGD" id="620225">
    <property type="gene designation" value="Snap29"/>
</dbReference>
<dbReference type="eggNOG" id="KOG3065">
    <property type="taxonomic scope" value="Eukaryota"/>
</dbReference>
<dbReference type="InParanoid" id="Q9Z2P6"/>
<dbReference type="PhylomeDB" id="Q9Z2P6"/>
<dbReference type="Reactome" id="R-RNO-6798695">
    <property type="pathway name" value="Neutrophil degranulation"/>
</dbReference>
<dbReference type="Reactome" id="R-RNO-6811438">
    <property type="pathway name" value="Intra-Golgi traffic"/>
</dbReference>
<dbReference type="PRO" id="PR:Q9Z2P6"/>
<dbReference type="Proteomes" id="UP000002494">
    <property type="component" value="Unplaced"/>
</dbReference>
<dbReference type="GO" id="GO:0005776">
    <property type="term" value="C:autophagosome"/>
    <property type="evidence" value="ECO:0000250"/>
    <property type="project" value="UniProtKB"/>
</dbReference>
<dbReference type="GO" id="GO:0000421">
    <property type="term" value="C:autophagosome membrane"/>
    <property type="evidence" value="ECO:0007669"/>
    <property type="project" value="UniProtKB-SubCell"/>
</dbReference>
<dbReference type="GO" id="GO:0020018">
    <property type="term" value="C:ciliary pocket membrane"/>
    <property type="evidence" value="ECO:0000250"/>
    <property type="project" value="UniProtKB"/>
</dbReference>
<dbReference type="GO" id="GO:0005737">
    <property type="term" value="C:cytoplasm"/>
    <property type="evidence" value="ECO:0000266"/>
    <property type="project" value="RGD"/>
</dbReference>
<dbReference type="GO" id="GO:0098850">
    <property type="term" value="C:extrinsic component of synaptic vesicle membrane"/>
    <property type="evidence" value="ECO:0000314"/>
    <property type="project" value="SynGO"/>
</dbReference>
<dbReference type="GO" id="GO:0000139">
    <property type="term" value="C:Golgi membrane"/>
    <property type="evidence" value="ECO:0007669"/>
    <property type="project" value="UniProtKB-SubCell"/>
</dbReference>
<dbReference type="GO" id="GO:0005886">
    <property type="term" value="C:plasma membrane"/>
    <property type="evidence" value="ECO:0000318"/>
    <property type="project" value="GO_Central"/>
</dbReference>
<dbReference type="GO" id="GO:0031201">
    <property type="term" value="C:SNARE complex"/>
    <property type="evidence" value="ECO:0000250"/>
    <property type="project" value="UniProtKB"/>
</dbReference>
<dbReference type="GO" id="GO:0008021">
    <property type="term" value="C:synaptic vesicle"/>
    <property type="evidence" value="ECO:0000314"/>
    <property type="project" value="SynGO"/>
</dbReference>
<dbReference type="GO" id="GO:0043195">
    <property type="term" value="C:terminal bouton"/>
    <property type="evidence" value="ECO:0007005"/>
    <property type="project" value="ParkinsonsUK-UCL"/>
</dbReference>
<dbReference type="GO" id="GO:0005484">
    <property type="term" value="F:SNAP receptor activity"/>
    <property type="evidence" value="ECO:0000318"/>
    <property type="project" value="GO_Central"/>
</dbReference>
<dbReference type="GO" id="GO:0019905">
    <property type="term" value="F:syntaxin binding"/>
    <property type="evidence" value="ECO:0000318"/>
    <property type="project" value="GO_Central"/>
</dbReference>
<dbReference type="GO" id="GO:0097352">
    <property type="term" value="P:autophagosome maturation"/>
    <property type="evidence" value="ECO:0000250"/>
    <property type="project" value="UniProtKB"/>
</dbReference>
<dbReference type="GO" id="GO:0016240">
    <property type="term" value="P:autophagosome membrane docking"/>
    <property type="evidence" value="ECO:0000266"/>
    <property type="project" value="RGD"/>
</dbReference>
<dbReference type="GO" id="GO:0060271">
    <property type="term" value="P:cilium assembly"/>
    <property type="evidence" value="ECO:0000250"/>
    <property type="project" value="UniProtKB"/>
</dbReference>
<dbReference type="GO" id="GO:0006887">
    <property type="term" value="P:exocytosis"/>
    <property type="evidence" value="ECO:0000318"/>
    <property type="project" value="GO_Central"/>
</dbReference>
<dbReference type="GO" id="GO:0015031">
    <property type="term" value="P:protein transport"/>
    <property type="evidence" value="ECO:0007669"/>
    <property type="project" value="UniProtKB-KW"/>
</dbReference>
<dbReference type="GO" id="GO:0098693">
    <property type="term" value="P:regulation of synaptic vesicle cycle"/>
    <property type="evidence" value="ECO:0000314"/>
    <property type="project" value="SynGO"/>
</dbReference>
<dbReference type="GO" id="GO:2000300">
    <property type="term" value="P:regulation of synaptic vesicle exocytosis"/>
    <property type="evidence" value="ECO:0000314"/>
    <property type="project" value="SynGO"/>
</dbReference>
<dbReference type="GO" id="GO:0031629">
    <property type="term" value="P:synaptic vesicle fusion to presynaptic active zone membrane"/>
    <property type="evidence" value="ECO:0000318"/>
    <property type="project" value="GO_Central"/>
</dbReference>
<dbReference type="GO" id="GO:0016082">
    <property type="term" value="P:synaptic vesicle priming"/>
    <property type="evidence" value="ECO:0000318"/>
    <property type="project" value="GO_Central"/>
</dbReference>
<dbReference type="CDD" id="cd15856">
    <property type="entry name" value="SNARE_SNAP29C"/>
    <property type="match status" value="1"/>
</dbReference>
<dbReference type="CDD" id="cd15887">
    <property type="entry name" value="SNARE_SNAP29N"/>
    <property type="match status" value="1"/>
</dbReference>
<dbReference type="FunFam" id="1.20.5.110:FF:000041">
    <property type="entry name" value="Synaptosomal-associated protein 29"/>
    <property type="match status" value="1"/>
</dbReference>
<dbReference type="FunFam" id="1.20.5.110:FF:000051">
    <property type="entry name" value="synaptosomal-associated protein 29"/>
    <property type="match status" value="1"/>
</dbReference>
<dbReference type="Gene3D" id="1.20.5.110">
    <property type="match status" value="2"/>
</dbReference>
<dbReference type="InterPro" id="IPR000727">
    <property type="entry name" value="T_SNARE_dom"/>
</dbReference>
<dbReference type="PANTHER" id="PTHR19305">
    <property type="entry name" value="SYNAPTOSOMAL ASSOCIATED PROTEIN"/>
    <property type="match status" value="1"/>
</dbReference>
<dbReference type="PANTHER" id="PTHR19305:SF9">
    <property type="entry name" value="SYNAPTOSOMAL-ASSOCIATED PROTEIN 29"/>
    <property type="match status" value="1"/>
</dbReference>
<dbReference type="SMART" id="SM00397">
    <property type="entry name" value="t_SNARE"/>
    <property type="match status" value="2"/>
</dbReference>
<dbReference type="SUPFAM" id="SSF58038">
    <property type="entry name" value="SNARE fusion complex"/>
    <property type="match status" value="2"/>
</dbReference>
<dbReference type="PROSITE" id="PS50192">
    <property type="entry name" value="T_SNARE"/>
    <property type="match status" value="1"/>
</dbReference>
<reference key="1">
    <citation type="journal article" date="1999" name="Mol. Biol. Cell">
        <title>GS32, a novel Golgi SNARE of 32 kDa, interacts preferentially with syntaxin 6.</title>
        <authorList>
            <person name="Wong S.H."/>
            <person name="Xu Y."/>
            <person name="Zhang T."/>
            <person name="Griffiths G."/>
            <person name="Lowe S.L."/>
            <person name="Subramaniam V.N."/>
            <person name="Seow K.T."/>
            <person name="Hong W."/>
        </authorList>
    </citation>
    <scope>NUCLEOTIDE SEQUENCE [MRNA]</scope>
    <scope>SUBCELLULAR LOCATION</scope>
    <scope>INTERACTION WITH STX6</scope>
    <scope>TISSUE SPECIFICITY</scope>
</reference>
<reference key="2">
    <citation type="submission" date="2007-04" db="UniProtKB">
        <authorList>
            <person name="Lubec G."/>
            <person name="Diao W."/>
        </authorList>
    </citation>
    <scope>PROTEIN SEQUENCE OF 170-190 AND 201-235</scope>
    <scope>IDENTIFICATION BY MASS SPECTROMETRY</scope>
    <source>
        <strain>Sprague-Dawley</strain>
        <tissue>Hippocampus</tissue>
    </source>
</reference>
<reference key="3">
    <citation type="journal article" date="2016" name="PLoS Genet.">
        <title>The EARP complex and its interactor eipr-1 are required for cargo sorting to dense-core vesicles.</title>
        <authorList>
            <person name="Topalidou I."/>
            <person name="Cattin-Ortola J."/>
            <person name="Pappas A.L."/>
            <person name="Cooper K."/>
            <person name="Merrihew G.E."/>
            <person name="MacCoss M.J."/>
            <person name="Ailion M."/>
        </authorList>
    </citation>
    <scope>INTERACTION WITH EIPR1</scope>
</reference>